<dbReference type="EMBL" id="CP000478">
    <property type="protein sequence ID" value="ABK17426.1"/>
    <property type="molecule type" value="Genomic_DNA"/>
</dbReference>
<dbReference type="RefSeq" id="WP_011698596.1">
    <property type="nucleotide sequence ID" value="NC_008554.1"/>
</dbReference>
<dbReference type="SMR" id="A0LJ24"/>
<dbReference type="STRING" id="335543.Sfum_1739"/>
<dbReference type="KEGG" id="sfu:Sfum_1739"/>
<dbReference type="eggNOG" id="COG1492">
    <property type="taxonomic scope" value="Bacteria"/>
</dbReference>
<dbReference type="HOGENOM" id="CLU_019250_2_2_7"/>
<dbReference type="InParanoid" id="A0LJ24"/>
<dbReference type="OrthoDB" id="9808302at2"/>
<dbReference type="UniPathway" id="UPA00148"/>
<dbReference type="Proteomes" id="UP000001784">
    <property type="component" value="Chromosome"/>
</dbReference>
<dbReference type="GO" id="GO:0015420">
    <property type="term" value="F:ABC-type vitamin B12 transporter activity"/>
    <property type="evidence" value="ECO:0007669"/>
    <property type="project" value="UniProtKB-UniRule"/>
</dbReference>
<dbReference type="GO" id="GO:0003824">
    <property type="term" value="F:catalytic activity"/>
    <property type="evidence" value="ECO:0007669"/>
    <property type="project" value="InterPro"/>
</dbReference>
<dbReference type="GO" id="GO:0009236">
    <property type="term" value="P:cobalamin biosynthetic process"/>
    <property type="evidence" value="ECO:0007669"/>
    <property type="project" value="UniProtKB-UniRule"/>
</dbReference>
<dbReference type="CDD" id="cd05389">
    <property type="entry name" value="CobQ_N"/>
    <property type="match status" value="1"/>
</dbReference>
<dbReference type="CDD" id="cd01750">
    <property type="entry name" value="GATase1_CobQ"/>
    <property type="match status" value="1"/>
</dbReference>
<dbReference type="Gene3D" id="3.40.50.880">
    <property type="match status" value="1"/>
</dbReference>
<dbReference type="Gene3D" id="3.40.50.300">
    <property type="entry name" value="P-loop containing nucleotide triphosphate hydrolases"/>
    <property type="match status" value="1"/>
</dbReference>
<dbReference type="HAMAP" id="MF_00028">
    <property type="entry name" value="CobQ"/>
    <property type="match status" value="1"/>
</dbReference>
<dbReference type="InterPro" id="IPR029062">
    <property type="entry name" value="Class_I_gatase-like"/>
</dbReference>
<dbReference type="InterPro" id="IPR002586">
    <property type="entry name" value="CobQ/CobB/MinD/ParA_Nub-bd_dom"/>
</dbReference>
<dbReference type="InterPro" id="IPR033949">
    <property type="entry name" value="CobQ_GATase1"/>
</dbReference>
<dbReference type="InterPro" id="IPR047045">
    <property type="entry name" value="CobQ_N"/>
</dbReference>
<dbReference type="InterPro" id="IPR004459">
    <property type="entry name" value="CobQ_synth"/>
</dbReference>
<dbReference type="InterPro" id="IPR011698">
    <property type="entry name" value="GATase_3"/>
</dbReference>
<dbReference type="InterPro" id="IPR027417">
    <property type="entry name" value="P-loop_NTPase"/>
</dbReference>
<dbReference type="NCBIfam" id="TIGR00313">
    <property type="entry name" value="cobQ"/>
    <property type="match status" value="1"/>
</dbReference>
<dbReference type="NCBIfam" id="NF001989">
    <property type="entry name" value="PRK00784.1"/>
    <property type="match status" value="1"/>
</dbReference>
<dbReference type="PANTHER" id="PTHR21343:SF1">
    <property type="entry name" value="COBYRIC ACID SYNTHASE"/>
    <property type="match status" value="1"/>
</dbReference>
<dbReference type="PANTHER" id="PTHR21343">
    <property type="entry name" value="DETHIOBIOTIN SYNTHETASE"/>
    <property type="match status" value="1"/>
</dbReference>
<dbReference type="Pfam" id="PF01656">
    <property type="entry name" value="CbiA"/>
    <property type="match status" value="1"/>
</dbReference>
<dbReference type="Pfam" id="PF07685">
    <property type="entry name" value="GATase_3"/>
    <property type="match status" value="1"/>
</dbReference>
<dbReference type="SUPFAM" id="SSF52317">
    <property type="entry name" value="Class I glutamine amidotransferase-like"/>
    <property type="match status" value="1"/>
</dbReference>
<dbReference type="SUPFAM" id="SSF52540">
    <property type="entry name" value="P-loop containing nucleoside triphosphate hydrolases"/>
    <property type="match status" value="1"/>
</dbReference>
<dbReference type="PROSITE" id="PS51274">
    <property type="entry name" value="GATASE_COBBQ"/>
    <property type="match status" value="1"/>
</dbReference>
<sequence>MIGRARPLMFLGTGSDVGKSVLAAAFCRILKQDGYSVAPFKAQNMALNSYITPEGGEMGRAQVVQAEAAGIEPHVDMNPVLLKPTSQMGSQVIVRGRAIGNYSAQEYYEYKKNLVEVVRESYERLAARYDVVVLEGAGSAVELNLKEHDLVNLAMAKMADAPCILVGDIDRGGIFAALLGSTMLMTPDERDRTIGFIVNKLRGDPRLFASGVDILESRSGLPVFGVVPHFDHIALPEEDSVALGRRARRVETRGSEDALMVGVVRLPYVSNYTDFDCLEHEPDVELLYFDRPEQVFGFDAVILPGSKNTIEDLAFLRKNGMAEAVVAFYKSGGTVVGLCGGYQMMGLRVSDPHGVESSIREIAGLGLLDMETEMFQDKVTSQVTALNIGGSGLEVSEDDALRGYEIHMGRSASMGGARPLFRIVSRDGLPVQVEDGLIQPGGRAWGTYIHGIFDNDGLRKAFLAGLKSRSGKTRVALSAGFSYQDWKNEQYDRLADHIRQHVDVKRIRRIIGLW</sequence>
<protein>
    <recommendedName>
        <fullName evidence="1">Cobyric acid synthase</fullName>
    </recommendedName>
</protein>
<gene>
    <name evidence="1" type="primary">cobQ</name>
    <name type="ordered locus">Sfum_1739</name>
</gene>
<reference key="1">
    <citation type="submission" date="2006-10" db="EMBL/GenBank/DDBJ databases">
        <title>Complete sequence of Syntrophobacter fumaroxidans MPOB.</title>
        <authorList>
            <consortium name="US DOE Joint Genome Institute"/>
            <person name="Copeland A."/>
            <person name="Lucas S."/>
            <person name="Lapidus A."/>
            <person name="Barry K."/>
            <person name="Detter J.C."/>
            <person name="Glavina del Rio T."/>
            <person name="Hammon N."/>
            <person name="Israni S."/>
            <person name="Pitluck S."/>
            <person name="Goltsman E.G."/>
            <person name="Martinez M."/>
            <person name="Schmutz J."/>
            <person name="Larimer F."/>
            <person name="Land M."/>
            <person name="Hauser L."/>
            <person name="Kyrpides N."/>
            <person name="Kim E."/>
            <person name="Boone D.R."/>
            <person name="Brockman F."/>
            <person name="Culley D."/>
            <person name="Ferry J."/>
            <person name="Gunsalus R."/>
            <person name="McInerney M.J."/>
            <person name="Morrison M."/>
            <person name="Plugge C."/>
            <person name="Rohlin L."/>
            <person name="Scholten J."/>
            <person name="Sieber J."/>
            <person name="Stams A.J.M."/>
            <person name="Worm P."/>
            <person name="Henstra A.M."/>
            <person name="Richardson P."/>
        </authorList>
    </citation>
    <scope>NUCLEOTIDE SEQUENCE [LARGE SCALE GENOMIC DNA]</scope>
    <source>
        <strain>DSM 10017 / MPOB</strain>
    </source>
</reference>
<proteinExistence type="inferred from homology"/>
<keyword id="KW-0169">Cobalamin biosynthesis</keyword>
<keyword id="KW-0315">Glutamine amidotransferase</keyword>
<keyword id="KW-1185">Reference proteome</keyword>
<name>COBQ_SYNFM</name>
<evidence type="ECO:0000255" key="1">
    <source>
        <dbReference type="HAMAP-Rule" id="MF_00028"/>
    </source>
</evidence>
<comment type="function">
    <text evidence="1">Catalyzes amidations at positions B, D, E, and G on adenosylcobyrinic A,C-diamide. NH(2) groups are provided by glutamine, and one molecule of ATP is hydrogenolyzed for each amidation.</text>
</comment>
<comment type="pathway">
    <text evidence="1">Cofactor biosynthesis; adenosylcobalamin biosynthesis.</text>
</comment>
<comment type="similarity">
    <text evidence="1">Belongs to the CobB/CobQ family. CobQ subfamily.</text>
</comment>
<accession>A0LJ24</accession>
<organism>
    <name type="scientific">Syntrophobacter fumaroxidans (strain DSM 10017 / MPOB)</name>
    <dbReference type="NCBI Taxonomy" id="335543"/>
    <lineage>
        <taxon>Bacteria</taxon>
        <taxon>Pseudomonadati</taxon>
        <taxon>Thermodesulfobacteriota</taxon>
        <taxon>Syntrophobacteria</taxon>
        <taxon>Syntrophobacterales</taxon>
        <taxon>Syntrophobacteraceae</taxon>
        <taxon>Syntrophobacter</taxon>
    </lineage>
</organism>
<feature type="chain" id="PRO_0000332398" description="Cobyric acid synthase">
    <location>
        <begin position="1"/>
        <end position="514"/>
    </location>
</feature>
<feature type="domain" description="GATase cobBQ-type" evidence="1">
    <location>
        <begin position="258"/>
        <end position="458"/>
    </location>
</feature>
<feature type="active site" description="Nucleophile" evidence="1">
    <location>
        <position position="339"/>
    </location>
</feature>
<feature type="active site" evidence="1">
    <location>
        <position position="450"/>
    </location>
</feature>